<proteinExistence type="evidence at transcript level"/>
<sequence length="258" mass="27750">MAAKVITFMAVMVVTAFTANAKIPGVYTGGPWINAHATFYGEADASGTMGGACGYGNLYSQGYGVNTAALSTALFNNGLSCGSCFELKCINDPGWCLPGNPSILITATNFCPPNFNQASDNGGWCNPPREHFDLAMPMFLSIAKYKAGIVPVSYRRIPCRKKGGIRFTINGFKYFNLVLVTNVAGAGDVIKVSVKGSNTQWLDLSRNWGQNWQSNALLVGQSLSFRVKTSDGRSSTSNNIAPSNWQFGQTYSGKNFRV</sequence>
<comment type="function">
    <text evidence="1">Causes loosening and extension of plant cell walls by disrupting non-covalent bonding between cellulose microfibrils and matrix glucans. No enzymatic activity has been found (By similarity).</text>
</comment>
<comment type="subcellular location">
    <subcellularLocation>
        <location>Secreted</location>
        <location>Cell wall</location>
    </subcellularLocation>
    <subcellularLocation>
        <location>Membrane</location>
        <topology>Peripheral membrane protein</topology>
    </subcellularLocation>
</comment>
<comment type="similarity">
    <text evidence="5">Belongs to the expansin family. Expansin A subfamily.</text>
</comment>
<comment type="online information" name="EXPANSIN homepage">
    <link uri="https://www.dept.psu.edu/biology/groups/expansins/index.htm"/>
</comment>
<accession>Q9LZ99</accession>
<dbReference type="EMBL" id="AL162874">
    <property type="protein sequence ID" value="CAB85531.1"/>
    <property type="molecule type" value="Genomic_DNA"/>
</dbReference>
<dbReference type="EMBL" id="CP002688">
    <property type="protein sequence ID" value="AED90451.1"/>
    <property type="molecule type" value="Genomic_DNA"/>
</dbReference>
<dbReference type="EMBL" id="AY054586">
    <property type="protein sequence ID" value="AAK96777.1"/>
    <property type="molecule type" value="mRNA"/>
</dbReference>
<dbReference type="EMBL" id="AY064685">
    <property type="protein sequence ID" value="AAL47389.1"/>
    <property type="molecule type" value="mRNA"/>
</dbReference>
<dbReference type="EMBL" id="AY086085">
    <property type="protein sequence ID" value="AAM63290.1"/>
    <property type="molecule type" value="mRNA"/>
</dbReference>
<dbReference type="PIR" id="T48247">
    <property type="entry name" value="T48247"/>
</dbReference>
<dbReference type="RefSeq" id="NP_195846.1">
    <property type="nucleotide sequence ID" value="NM_120304.3"/>
</dbReference>
<dbReference type="SMR" id="Q9LZ99"/>
<dbReference type="FunCoup" id="Q9LZ99">
    <property type="interactions" value="102"/>
</dbReference>
<dbReference type="STRING" id="3702.Q9LZ99"/>
<dbReference type="PaxDb" id="3702-AT5G02260.1"/>
<dbReference type="ProteomicsDB" id="222417"/>
<dbReference type="EnsemblPlants" id="AT5G02260.1">
    <property type="protein sequence ID" value="AT5G02260.1"/>
    <property type="gene ID" value="AT5G02260"/>
</dbReference>
<dbReference type="GeneID" id="831736"/>
<dbReference type="Gramene" id="AT5G02260.1">
    <property type="protein sequence ID" value="AT5G02260.1"/>
    <property type="gene ID" value="AT5G02260"/>
</dbReference>
<dbReference type="KEGG" id="ath:AT5G02260"/>
<dbReference type="Araport" id="AT5G02260"/>
<dbReference type="TAIR" id="AT5G02260">
    <property type="gene designation" value="EXPA9"/>
</dbReference>
<dbReference type="eggNOG" id="ENOG502QR06">
    <property type="taxonomic scope" value="Eukaryota"/>
</dbReference>
<dbReference type="HOGENOM" id="CLU_027462_0_1_1"/>
<dbReference type="InParanoid" id="Q9LZ99"/>
<dbReference type="OMA" id="YTGGPWI"/>
<dbReference type="OrthoDB" id="5823761at2759"/>
<dbReference type="PhylomeDB" id="Q9LZ99"/>
<dbReference type="PRO" id="PR:Q9LZ99"/>
<dbReference type="Proteomes" id="UP000006548">
    <property type="component" value="Chromosome 5"/>
</dbReference>
<dbReference type="ExpressionAtlas" id="Q9LZ99">
    <property type="expression patterns" value="baseline and differential"/>
</dbReference>
<dbReference type="GO" id="GO:0005576">
    <property type="term" value="C:extracellular region"/>
    <property type="evidence" value="ECO:0007669"/>
    <property type="project" value="UniProtKB-KW"/>
</dbReference>
<dbReference type="GO" id="GO:0016020">
    <property type="term" value="C:membrane"/>
    <property type="evidence" value="ECO:0007669"/>
    <property type="project" value="UniProtKB-SubCell"/>
</dbReference>
<dbReference type="GO" id="GO:0009653">
    <property type="term" value="P:anatomical structure morphogenesis"/>
    <property type="evidence" value="ECO:0007669"/>
    <property type="project" value="UniProtKB-ARBA"/>
</dbReference>
<dbReference type="GO" id="GO:0009828">
    <property type="term" value="P:plant-type cell wall loosening"/>
    <property type="evidence" value="ECO:0000250"/>
    <property type="project" value="UniProtKB"/>
</dbReference>
<dbReference type="CDD" id="cd22274">
    <property type="entry name" value="DPBB_EXPA_N"/>
    <property type="match status" value="1"/>
</dbReference>
<dbReference type="FunFam" id="2.40.40.10:FF:000001">
    <property type="entry name" value="Expansin"/>
    <property type="match status" value="1"/>
</dbReference>
<dbReference type="FunFam" id="2.60.40.760:FF:000001">
    <property type="entry name" value="Expansin"/>
    <property type="match status" value="1"/>
</dbReference>
<dbReference type="Gene3D" id="2.60.40.760">
    <property type="entry name" value="Expansin, cellulose-binding-like domain"/>
    <property type="match status" value="1"/>
</dbReference>
<dbReference type="Gene3D" id="2.40.40.10">
    <property type="entry name" value="RlpA-like domain"/>
    <property type="match status" value="1"/>
</dbReference>
<dbReference type="InterPro" id="IPR007118">
    <property type="entry name" value="Expan_Lol_pI"/>
</dbReference>
<dbReference type="InterPro" id="IPR002963">
    <property type="entry name" value="Expansin"/>
</dbReference>
<dbReference type="InterPro" id="IPR007112">
    <property type="entry name" value="Expansin/allergen_DPBB_dom"/>
</dbReference>
<dbReference type="InterPro" id="IPR007117">
    <property type="entry name" value="Expansin_CBD"/>
</dbReference>
<dbReference type="InterPro" id="IPR036749">
    <property type="entry name" value="Expansin_CBD_sf"/>
</dbReference>
<dbReference type="InterPro" id="IPR009009">
    <property type="entry name" value="RlpA-like_DPBB"/>
</dbReference>
<dbReference type="InterPro" id="IPR036908">
    <property type="entry name" value="RlpA-like_sf"/>
</dbReference>
<dbReference type="PANTHER" id="PTHR31867">
    <property type="entry name" value="EXPANSIN-A15"/>
    <property type="match status" value="1"/>
</dbReference>
<dbReference type="Pfam" id="PF03330">
    <property type="entry name" value="DPBB_1"/>
    <property type="match status" value="1"/>
</dbReference>
<dbReference type="Pfam" id="PF01357">
    <property type="entry name" value="Expansin_C"/>
    <property type="match status" value="1"/>
</dbReference>
<dbReference type="PRINTS" id="PR01226">
    <property type="entry name" value="EXPANSIN"/>
</dbReference>
<dbReference type="PRINTS" id="PR01225">
    <property type="entry name" value="EXPANSNFAMLY"/>
</dbReference>
<dbReference type="SMART" id="SM00837">
    <property type="entry name" value="DPBB_1"/>
    <property type="match status" value="1"/>
</dbReference>
<dbReference type="SUPFAM" id="SSF50685">
    <property type="entry name" value="Barwin-like endoglucanases"/>
    <property type="match status" value="1"/>
</dbReference>
<dbReference type="SUPFAM" id="SSF49590">
    <property type="entry name" value="PHL pollen allergen"/>
    <property type="match status" value="1"/>
</dbReference>
<dbReference type="PROSITE" id="PS50843">
    <property type="entry name" value="EXPANSIN_CBD"/>
    <property type="match status" value="1"/>
</dbReference>
<dbReference type="PROSITE" id="PS50842">
    <property type="entry name" value="EXPANSIN_EG45"/>
    <property type="match status" value="1"/>
</dbReference>
<reference key="1">
    <citation type="journal article" date="2000" name="Nature">
        <title>Sequence and analysis of chromosome 5 of the plant Arabidopsis thaliana.</title>
        <authorList>
            <person name="Tabata S."/>
            <person name="Kaneko T."/>
            <person name="Nakamura Y."/>
            <person name="Kotani H."/>
            <person name="Kato T."/>
            <person name="Asamizu E."/>
            <person name="Miyajima N."/>
            <person name="Sasamoto S."/>
            <person name="Kimura T."/>
            <person name="Hosouchi T."/>
            <person name="Kawashima K."/>
            <person name="Kohara M."/>
            <person name="Matsumoto M."/>
            <person name="Matsuno A."/>
            <person name="Muraki A."/>
            <person name="Nakayama S."/>
            <person name="Nakazaki N."/>
            <person name="Naruo K."/>
            <person name="Okumura S."/>
            <person name="Shinpo S."/>
            <person name="Takeuchi C."/>
            <person name="Wada T."/>
            <person name="Watanabe A."/>
            <person name="Yamada M."/>
            <person name="Yasuda M."/>
            <person name="Sato S."/>
            <person name="de la Bastide M."/>
            <person name="Huang E."/>
            <person name="Spiegel L."/>
            <person name="Gnoj L."/>
            <person name="O'Shaughnessy A."/>
            <person name="Preston R."/>
            <person name="Habermann K."/>
            <person name="Murray J."/>
            <person name="Johnson D."/>
            <person name="Rohlfing T."/>
            <person name="Nelson J."/>
            <person name="Stoneking T."/>
            <person name="Pepin K."/>
            <person name="Spieth J."/>
            <person name="Sekhon M."/>
            <person name="Armstrong J."/>
            <person name="Becker M."/>
            <person name="Belter E."/>
            <person name="Cordum H."/>
            <person name="Cordes M."/>
            <person name="Courtney L."/>
            <person name="Courtney W."/>
            <person name="Dante M."/>
            <person name="Du H."/>
            <person name="Edwards J."/>
            <person name="Fryman J."/>
            <person name="Haakensen B."/>
            <person name="Lamar E."/>
            <person name="Latreille P."/>
            <person name="Leonard S."/>
            <person name="Meyer R."/>
            <person name="Mulvaney E."/>
            <person name="Ozersky P."/>
            <person name="Riley A."/>
            <person name="Strowmatt C."/>
            <person name="Wagner-McPherson C."/>
            <person name="Wollam A."/>
            <person name="Yoakum M."/>
            <person name="Bell M."/>
            <person name="Dedhia N."/>
            <person name="Parnell L."/>
            <person name="Shah R."/>
            <person name="Rodriguez M."/>
            <person name="Hoon See L."/>
            <person name="Vil D."/>
            <person name="Baker J."/>
            <person name="Kirchoff K."/>
            <person name="Toth K."/>
            <person name="King L."/>
            <person name="Bahret A."/>
            <person name="Miller B."/>
            <person name="Marra M.A."/>
            <person name="Martienssen R."/>
            <person name="McCombie W.R."/>
            <person name="Wilson R.K."/>
            <person name="Murphy G."/>
            <person name="Bancroft I."/>
            <person name="Volckaert G."/>
            <person name="Wambutt R."/>
            <person name="Duesterhoeft A."/>
            <person name="Stiekema W."/>
            <person name="Pohl T."/>
            <person name="Entian K.-D."/>
            <person name="Terryn N."/>
            <person name="Hartley N."/>
            <person name="Bent E."/>
            <person name="Johnson S."/>
            <person name="Langham S.-A."/>
            <person name="McCullagh B."/>
            <person name="Robben J."/>
            <person name="Grymonprez B."/>
            <person name="Zimmermann W."/>
            <person name="Ramsperger U."/>
            <person name="Wedler H."/>
            <person name="Balke K."/>
            <person name="Wedler E."/>
            <person name="Peters S."/>
            <person name="van Staveren M."/>
            <person name="Dirkse W."/>
            <person name="Mooijman P."/>
            <person name="Klein Lankhorst R."/>
            <person name="Weitzenegger T."/>
            <person name="Bothe G."/>
            <person name="Rose M."/>
            <person name="Hauf J."/>
            <person name="Berneiser S."/>
            <person name="Hempel S."/>
            <person name="Feldpausch M."/>
            <person name="Lamberth S."/>
            <person name="Villarroel R."/>
            <person name="Gielen J."/>
            <person name="Ardiles W."/>
            <person name="Bents O."/>
            <person name="Lemcke K."/>
            <person name="Kolesov G."/>
            <person name="Mayer K.F.X."/>
            <person name="Rudd S."/>
            <person name="Schoof H."/>
            <person name="Schueller C."/>
            <person name="Zaccaria P."/>
            <person name="Mewes H.-W."/>
            <person name="Bevan M."/>
            <person name="Fransz P.F."/>
        </authorList>
    </citation>
    <scope>NUCLEOTIDE SEQUENCE [LARGE SCALE GENOMIC DNA]</scope>
    <source>
        <strain>cv. Columbia</strain>
    </source>
</reference>
<reference key="2">
    <citation type="journal article" date="2017" name="Plant J.">
        <title>Araport11: a complete reannotation of the Arabidopsis thaliana reference genome.</title>
        <authorList>
            <person name="Cheng C.Y."/>
            <person name="Krishnakumar V."/>
            <person name="Chan A.P."/>
            <person name="Thibaud-Nissen F."/>
            <person name="Schobel S."/>
            <person name="Town C.D."/>
        </authorList>
    </citation>
    <scope>GENOME REANNOTATION</scope>
    <source>
        <strain>cv. Columbia</strain>
    </source>
</reference>
<reference key="3">
    <citation type="journal article" date="2003" name="Science">
        <title>Empirical analysis of transcriptional activity in the Arabidopsis genome.</title>
        <authorList>
            <person name="Yamada K."/>
            <person name="Lim J."/>
            <person name="Dale J.M."/>
            <person name="Chen H."/>
            <person name="Shinn P."/>
            <person name="Palm C.J."/>
            <person name="Southwick A.M."/>
            <person name="Wu H.C."/>
            <person name="Kim C.J."/>
            <person name="Nguyen M."/>
            <person name="Pham P.K."/>
            <person name="Cheuk R.F."/>
            <person name="Karlin-Newmann G."/>
            <person name="Liu S.X."/>
            <person name="Lam B."/>
            <person name="Sakano H."/>
            <person name="Wu T."/>
            <person name="Yu G."/>
            <person name="Miranda M."/>
            <person name="Quach H.L."/>
            <person name="Tripp M."/>
            <person name="Chang C.H."/>
            <person name="Lee J.M."/>
            <person name="Toriumi M.J."/>
            <person name="Chan M.M."/>
            <person name="Tang C.C."/>
            <person name="Onodera C.S."/>
            <person name="Deng J.M."/>
            <person name="Akiyama K."/>
            <person name="Ansari Y."/>
            <person name="Arakawa T."/>
            <person name="Banh J."/>
            <person name="Banno F."/>
            <person name="Bowser L."/>
            <person name="Brooks S.Y."/>
            <person name="Carninci P."/>
            <person name="Chao Q."/>
            <person name="Choy N."/>
            <person name="Enju A."/>
            <person name="Goldsmith A.D."/>
            <person name="Gurjal M."/>
            <person name="Hansen N.F."/>
            <person name="Hayashizaki Y."/>
            <person name="Johnson-Hopson C."/>
            <person name="Hsuan V.W."/>
            <person name="Iida K."/>
            <person name="Karnes M."/>
            <person name="Khan S."/>
            <person name="Koesema E."/>
            <person name="Ishida J."/>
            <person name="Jiang P.X."/>
            <person name="Jones T."/>
            <person name="Kawai J."/>
            <person name="Kamiya A."/>
            <person name="Meyers C."/>
            <person name="Nakajima M."/>
            <person name="Narusaka M."/>
            <person name="Seki M."/>
            <person name="Sakurai T."/>
            <person name="Satou M."/>
            <person name="Tamse R."/>
            <person name="Vaysberg M."/>
            <person name="Wallender E.K."/>
            <person name="Wong C."/>
            <person name="Yamamura Y."/>
            <person name="Yuan S."/>
            <person name="Shinozaki K."/>
            <person name="Davis R.W."/>
            <person name="Theologis A."/>
            <person name="Ecker J.R."/>
        </authorList>
    </citation>
    <scope>NUCLEOTIDE SEQUENCE [LARGE SCALE MRNA]</scope>
    <source>
        <strain>cv. Columbia</strain>
    </source>
</reference>
<reference key="4">
    <citation type="submission" date="2002-03" db="EMBL/GenBank/DDBJ databases">
        <title>Full-length cDNA from Arabidopsis thaliana.</title>
        <authorList>
            <person name="Brover V.V."/>
            <person name="Troukhan M.E."/>
            <person name="Alexandrov N.A."/>
            <person name="Lu Y.-P."/>
            <person name="Flavell R.B."/>
            <person name="Feldmann K.A."/>
        </authorList>
    </citation>
    <scope>NUCLEOTIDE SEQUENCE [LARGE SCALE MRNA]</scope>
</reference>
<reference key="5">
    <citation type="journal article" date="2004" name="Plant Mol. Biol.">
        <title>Nomenclature for members of the expansin superfamily of genes and proteins.</title>
        <authorList>
            <person name="Kende H."/>
            <person name="Bradford K.J."/>
            <person name="Brummell D.A."/>
            <person name="Cho H.-T."/>
            <person name="Cosgrove D.J."/>
            <person name="Fleming A.J."/>
            <person name="Gehring C."/>
            <person name="Lee Y."/>
            <person name="McQueen-Mason S.J."/>
            <person name="Rose J.K.C."/>
            <person name="Voesenek L.A.C."/>
        </authorList>
    </citation>
    <scope>NOMENCLATURE</scope>
</reference>
<keyword id="KW-0134">Cell wall</keyword>
<keyword id="KW-0961">Cell wall biogenesis/degradation</keyword>
<keyword id="KW-1015">Disulfide bond</keyword>
<keyword id="KW-0472">Membrane</keyword>
<keyword id="KW-1185">Reference proteome</keyword>
<keyword id="KW-0964">Secreted</keyword>
<keyword id="KW-0732">Signal</keyword>
<gene>
    <name type="primary">EXPA9</name>
    <name type="synonym">EXP9</name>
    <name type="ordered locus">At5g02260</name>
    <name type="ORF">T1E22_20</name>
</gene>
<protein>
    <recommendedName>
        <fullName>Expansin-A9</fullName>
        <shortName>AtEXPA9</shortName>
    </recommendedName>
    <alternativeName>
        <fullName>Alpha-expansin-9</fullName>
        <shortName>At-EXP9</shortName>
        <shortName>AtEx9</shortName>
    </alternativeName>
    <alternativeName>
        <fullName>Ath-ExpAlpha-1.10</fullName>
    </alternativeName>
</protein>
<evidence type="ECO:0000250" key="1"/>
<evidence type="ECO:0000255" key="2"/>
<evidence type="ECO:0000255" key="3">
    <source>
        <dbReference type="PROSITE-ProRule" id="PRU00078"/>
    </source>
</evidence>
<evidence type="ECO:0000255" key="4">
    <source>
        <dbReference type="PROSITE-ProRule" id="PRU00079"/>
    </source>
</evidence>
<evidence type="ECO:0000305" key="5"/>
<feature type="signal peptide" evidence="2">
    <location>
        <begin position="1"/>
        <end position="21"/>
    </location>
</feature>
<feature type="chain" id="PRO_0000008690" description="Expansin-A9">
    <location>
        <begin position="22"/>
        <end position="258"/>
    </location>
</feature>
<feature type="domain" description="Expansin-like EG45" evidence="4">
    <location>
        <begin position="50"/>
        <end position="164"/>
    </location>
</feature>
<feature type="domain" description="Expansin-like CBD" evidence="3">
    <location>
        <begin position="174"/>
        <end position="253"/>
    </location>
</feature>
<feature type="disulfide bond" evidence="4">
    <location>
        <begin position="53"/>
        <end position="81"/>
    </location>
</feature>
<feature type="disulfide bond" evidence="4">
    <location>
        <begin position="84"/>
        <end position="159"/>
    </location>
</feature>
<feature type="disulfide bond" evidence="4">
    <location>
        <begin position="89"/>
        <end position="96"/>
    </location>
</feature>
<organism>
    <name type="scientific">Arabidopsis thaliana</name>
    <name type="common">Mouse-ear cress</name>
    <dbReference type="NCBI Taxonomy" id="3702"/>
    <lineage>
        <taxon>Eukaryota</taxon>
        <taxon>Viridiplantae</taxon>
        <taxon>Streptophyta</taxon>
        <taxon>Embryophyta</taxon>
        <taxon>Tracheophyta</taxon>
        <taxon>Spermatophyta</taxon>
        <taxon>Magnoliopsida</taxon>
        <taxon>eudicotyledons</taxon>
        <taxon>Gunneridae</taxon>
        <taxon>Pentapetalae</taxon>
        <taxon>rosids</taxon>
        <taxon>malvids</taxon>
        <taxon>Brassicales</taxon>
        <taxon>Brassicaceae</taxon>
        <taxon>Camelineae</taxon>
        <taxon>Arabidopsis</taxon>
    </lineage>
</organism>
<name>EXPA9_ARATH</name>